<keyword id="KW-0120">Carbon dioxide fixation</keyword>
<keyword id="KW-0456">Lyase</keyword>
<keyword id="KW-0460">Magnesium</keyword>
<feature type="chain" id="PRO_1000025572" description="Phosphoenolpyruvate carboxylase">
    <location>
        <begin position="1"/>
        <end position="989"/>
    </location>
</feature>
<feature type="active site" evidence="1">
    <location>
        <position position="175"/>
    </location>
</feature>
<feature type="active site" evidence="1">
    <location>
        <position position="630"/>
    </location>
</feature>
<evidence type="ECO:0000255" key="1">
    <source>
        <dbReference type="HAMAP-Rule" id="MF_00595"/>
    </source>
</evidence>
<proteinExistence type="inferred from homology"/>
<organism>
    <name type="scientific">Prochlorococcus marinus (strain MIT 9312)</name>
    <dbReference type="NCBI Taxonomy" id="74546"/>
    <lineage>
        <taxon>Bacteria</taxon>
        <taxon>Bacillati</taxon>
        <taxon>Cyanobacteriota</taxon>
        <taxon>Cyanophyceae</taxon>
        <taxon>Synechococcales</taxon>
        <taxon>Prochlorococcaceae</taxon>
        <taxon>Prochlorococcus</taxon>
    </lineage>
</organism>
<gene>
    <name evidence="1" type="primary">ppc</name>
    <name type="ordered locus">PMT9312_1667</name>
</gene>
<accession>Q318G7</accession>
<reference key="1">
    <citation type="journal article" date="2006" name="Science">
        <title>Genomic islands and the ecology and evolution of Prochlorococcus.</title>
        <authorList>
            <person name="Coleman M.L."/>
            <person name="Sullivan M.B."/>
            <person name="Martiny A.C."/>
            <person name="Steglich C."/>
            <person name="Barry K."/>
            <person name="Delong E.F."/>
            <person name="Chisholm S.W."/>
        </authorList>
    </citation>
    <scope>NUCLEOTIDE SEQUENCE [LARGE SCALE GENOMIC DNA]</scope>
    <source>
        <strain>MIT 9312</strain>
    </source>
</reference>
<protein>
    <recommendedName>
        <fullName evidence="1">Phosphoenolpyruvate carboxylase</fullName>
        <shortName evidence="1">PEPC</shortName>
        <shortName evidence="1">PEPCase</shortName>
        <ecNumber evidence="1">4.1.1.31</ecNumber>
    </recommendedName>
</protein>
<name>CAPP_PROM9</name>
<comment type="function">
    <text evidence="1">Forms oxaloacetate, a four-carbon dicarboxylic acid source for the tricarboxylic acid cycle.</text>
</comment>
<comment type="catalytic activity">
    <reaction evidence="1">
        <text>oxaloacetate + phosphate = phosphoenolpyruvate + hydrogencarbonate</text>
        <dbReference type="Rhea" id="RHEA:28370"/>
        <dbReference type="ChEBI" id="CHEBI:16452"/>
        <dbReference type="ChEBI" id="CHEBI:17544"/>
        <dbReference type="ChEBI" id="CHEBI:43474"/>
        <dbReference type="ChEBI" id="CHEBI:58702"/>
        <dbReference type="EC" id="4.1.1.31"/>
    </reaction>
</comment>
<comment type="cofactor">
    <cofactor evidence="1">
        <name>Mg(2+)</name>
        <dbReference type="ChEBI" id="CHEBI:18420"/>
    </cofactor>
</comment>
<comment type="similarity">
    <text evidence="1">Belongs to the PEPCase type 1 family.</text>
</comment>
<sequence>MESFQQIKNNKVDLISTNDPLDKNRLLIEDLWESVLREECPDDQAERLIQLKELSYSKQIEGDSSKTFKKEIVDIVNSMDLAESIAAARAFSLYFQLVNILEQRVEEDRYIQSFTNKNVQKSPDNLDPFAPALARQNAPVTFRELFYRLRKLNVPPGKLEELLQEMDIRLVFTAHPTEIVRHTIRHKQTRVANLLKKIQVEQFLTKEEKNFLKIQLKEEVRLWWRTDELHQFKPSVLDEVDYALHYFQQVLFNAMPQLRGRIAEALTENYPDVQLPSQSFCNFGSWVGSDRDGNPSVTPEITWRTACYQRQLMLERYITATSHLRDQLSVSMQWSQVSSSLLESLETDRVKFPAIYEARATRYRSEPYRLKLSYILEKLRLTQERNNLLADNGWKFDLEGELNTKNIDKVENLYYKSVNEFTYDLELIKNSLISTDLTCEAVNTLLTQVHIFGFSLASLDIRQESTRHSDAIQELTKYLDLSVQYDQMSEDEKIKWLVDELNTKRPLIPSDVKWTNTTEETFSVFKMVKRLQQEFGSRICHAYVISMSHSASDLLEVLLLAKEMGLLDQNSKNSNLLVVPLFETVEDLKRAPEVMEKLFKLDFYKSLLPKVGESFKPLQELMLGYSDSNKDSGFVSSNWEIHRAQIALQNLASRNNILLRLFHGRGGSVGRGGGPAYQAILAQPSGTLKGRIKITEQGEVLASKYSLPELALYNLETVTTAVIQNSLVNNRLDATPEWNQLMSRLAETSRSHYRKLVYENPDLLNFFQEVTPIEEISKLQISSRPARRKKGAKDLSSLRAIPWVFGWTQSRFLLPSWFGVGTALSSELNSDPQQIELLRVLHQRWPFFRMLISKVEMTLSKVDLEVAKYYVDTLGSEENKDSFDDIFEVISKEYSLTKSLVLEITGKNKLLESDRDLKSSVSLRNKTIIPLGFLQVSLLRRLRDQTRQPPISEFLIDKDESRRAYSRSELLRGALLTINGIAAGMRNTG</sequence>
<dbReference type="EC" id="4.1.1.31" evidence="1"/>
<dbReference type="EMBL" id="CP000111">
    <property type="protein sequence ID" value="ABB50728.1"/>
    <property type="molecule type" value="Genomic_DNA"/>
</dbReference>
<dbReference type="RefSeq" id="WP_011377209.1">
    <property type="nucleotide sequence ID" value="NC_007577.1"/>
</dbReference>
<dbReference type="SMR" id="Q318G7"/>
<dbReference type="STRING" id="74546.PMT9312_1667"/>
<dbReference type="KEGG" id="pmi:PMT9312_1667"/>
<dbReference type="eggNOG" id="COG2352">
    <property type="taxonomic scope" value="Bacteria"/>
</dbReference>
<dbReference type="HOGENOM" id="CLU_006557_2_0_3"/>
<dbReference type="OrthoDB" id="9768133at2"/>
<dbReference type="Proteomes" id="UP000002715">
    <property type="component" value="Chromosome"/>
</dbReference>
<dbReference type="GO" id="GO:0005829">
    <property type="term" value="C:cytosol"/>
    <property type="evidence" value="ECO:0007669"/>
    <property type="project" value="TreeGrafter"/>
</dbReference>
<dbReference type="GO" id="GO:0000287">
    <property type="term" value="F:magnesium ion binding"/>
    <property type="evidence" value="ECO:0007669"/>
    <property type="project" value="UniProtKB-UniRule"/>
</dbReference>
<dbReference type="GO" id="GO:0008964">
    <property type="term" value="F:phosphoenolpyruvate carboxylase activity"/>
    <property type="evidence" value="ECO:0007669"/>
    <property type="project" value="UniProtKB-UniRule"/>
</dbReference>
<dbReference type="GO" id="GO:0015977">
    <property type="term" value="P:carbon fixation"/>
    <property type="evidence" value="ECO:0007669"/>
    <property type="project" value="UniProtKB-UniRule"/>
</dbReference>
<dbReference type="GO" id="GO:0006107">
    <property type="term" value="P:oxaloacetate metabolic process"/>
    <property type="evidence" value="ECO:0007669"/>
    <property type="project" value="UniProtKB-UniRule"/>
</dbReference>
<dbReference type="GO" id="GO:0006099">
    <property type="term" value="P:tricarboxylic acid cycle"/>
    <property type="evidence" value="ECO:0007669"/>
    <property type="project" value="InterPro"/>
</dbReference>
<dbReference type="Gene3D" id="1.20.1440.90">
    <property type="entry name" value="Phosphoenolpyruvate/pyruvate domain"/>
    <property type="match status" value="1"/>
</dbReference>
<dbReference type="HAMAP" id="MF_00595">
    <property type="entry name" value="PEPcase_type1"/>
    <property type="match status" value="1"/>
</dbReference>
<dbReference type="InterPro" id="IPR021135">
    <property type="entry name" value="PEP_COase"/>
</dbReference>
<dbReference type="InterPro" id="IPR022805">
    <property type="entry name" value="PEP_COase_bac/pln-type"/>
</dbReference>
<dbReference type="InterPro" id="IPR018129">
    <property type="entry name" value="PEP_COase_Lys_AS"/>
</dbReference>
<dbReference type="InterPro" id="IPR033129">
    <property type="entry name" value="PEPCASE_His_AS"/>
</dbReference>
<dbReference type="InterPro" id="IPR015813">
    <property type="entry name" value="Pyrv/PenolPyrv_kinase-like_dom"/>
</dbReference>
<dbReference type="NCBIfam" id="NF000584">
    <property type="entry name" value="PRK00009.1"/>
    <property type="match status" value="1"/>
</dbReference>
<dbReference type="PANTHER" id="PTHR30523">
    <property type="entry name" value="PHOSPHOENOLPYRUVATE CARBOXYLASE"/>
    <property type="match status" value="1"/>
</dbReference>
<dbReference type="PANTHER" id="PTHR30523:SF6">
    <property type="entry name" value="PHOSPHOENOLPYRUVATE CARBOXYLASE"/>
    <property type="match status" value="1"/>
</dbReference>
<dbReference type="Pfam" id="PF00311">
    <property type="entry name" value="PEPcase"/>
    <property type="match status" value="1"/>
</dbReference>
<dbReference type="PRINTS" id="PR00150">
    <property type="entry name" value="PEPCARBXLASE"/>
</dbReference>
<dbReference type="SUPFAM" id="SSF51621">
    <property type="entry name" value="Phosphoenolpyruvate/pyruvate domain"/>
    <property type="match status" value="1"/>
</dbReference>
<dbReference type="PROSITE" id="PS00781">
    <property type="entry name" value="PEPCASE_1"/>
    <property type="match status" value="1"/>
</dbReference>
<dbReference type="PROSITE" id="PS00393">
    <property type="entry name" value="PEPCASE_2"/>
    <property type="match status" value="1"/>
</dbReference>